<gene>
    <name type="primary">CIT</name>
</gene>
<evidence type="ECO:0000250" key="1"/>
<evidence type="ECO:0000255" key="2"/>
<evidence type="ECO:0000255" key="3">
    <source>
        <dbReference type="PROSITE-ProRule" id="PRU10117"/>
    </source>
</evidence>
<evidence type="ECO:0000305" key="4"/>
<protein>
    <recommendedName>
        <fullName>Citrate synthase, mitochondrial</fullName>
        <ecNumber>2.3.3.16</ecNumber>
    </recommendedName>
</protein>
<name>CISY_CITMA</name>
<keyword id="KW-0496">Mitochondrion</keyword>
<keyword id="KW-0808">Transferase</keyword>
<keyword id="KW-0809">Transit peptide</keyword>
<keyword id="KW-0816">Tricarboxylic acid cycle</keyword>
<accession>P49298</accession>
<comment type="catalytic activity">
    <reaction evidence="3">
        <text>oxaloacetate + acetyl-CoA + H2O = citrate + CoA + H(+)</text>
        <dbReference type="Rhea" id="RHEA:16845"/>
        <dbReference type="ChEBI" id="CHEBI:15377"/>
        <dbReference type="ChEBI" id="CHEBI:15378"/>
        <dbReference type="ChEBI" id="CHEBI:16452"/>
        <dbReference type="ChEBI" id="CHEBI:16947"/>
        <dbReference type="ChEBI" id="CHEBI:57287"/>
        <dbReference type="ChEBI" id="CHEBI:57288"/>
        <dbReference type="EC" id="2.3.3.16"/>
    </reaction>
</comment>
<comment type="pathway">
    <text>Carbohydrate metabolism; tricarboxylic acid cycle; isocitrate from oxaloacetate: step 1/2.</text>
</comment>
<comment type="subunit">
    <text evidence="1">Homodimer.</text>
</comment>
<comment type="subcellular location">
    <subcellularLocation>
        <location>Mitochondrion matrix</location>
    </subcellularLocation>
</comment>
<comment type="miscellaneous">
    <text>Citrate synthase is found in nearly all cells capable of oxidative metabolism.</text>
</comment>
<comment type="similarity">
    <text evidence="4">Belongs to the citrate synthase family.</text>
</comment>
<reference key="1">
    <citation type="thesis" date="1994" institute="University of California Riverside" country="United States">
        <authorList>
            <person name="Canel C."/>
        </authorList>
    </citation>
    <scope>NUCLEOTIDE SEQUENCE [MRNA]</scope>
    <source>
        <strain>cv. Siamese Sweet 2240</strain>
    </source>
</reference>
<organism>
    <name type="scientific">Citrus maxima</name>
    <name type="common">Pomelo</name>
    <name type="synonym">Citrus grandis</name>
    <dbReference type="NCBI Taxonomy" id="37334"/>
    <lineage>
        <taxon>Eukaryota</taxon>
        <taxon>Viridiplantae</taxon>
        <taxon>Streptophyta</taxon>
        <taxon>Embryophyta</taxon>
        <taxon>Tracheophyta</taxon>
        <taxon>Spermatophyta</taxon>
        <taxon>Magnoliopsida</taxon>
        <taxon>eudicotyledons</taxon>
        <taxon>Gunneridae</taxon>
        <taxon>Pentapetalae</taxon>
        <taxon>rosids</taxon>
        <taxon>malvids</taxon>
        <taxon>Sapindales</taxon>
        <taxon>Rutaceae</taxon>
        <taxon>Aurantioideae</taxon>
        <taxon>Citrus</taxon>
    </lineage>
</organism>
<feature type="transit peptide" description="Mitochondrion" evidence="2">
    <location>
        <begin position="1"/>
        <end position="18"/>
    </location>
</feature>
<feature type="chain" id="PRO_0000005486" description="Citrate synthase, mitochondrial">
    <location>
        <begin position="19"/>
        <end position="471"/>
    </location>
</feature>
<feature type="active site" evidence="3">
    <location>
        <position position="307"/>
    </location>
</feature>
<feature type="active site" evidence="3">
    <location>
        <position position="353"/>
    </location>
</feature>
<feature type="active site" evidence="3">
    <location>
        <position position="408"/>
    </location>
</feature>
<dbReference type="EC" id="2.3.3.16"/>
<dbReference type="EMBL" id="U19481">
    <property type="protein sequence ID" value="AAA82743.1"/>
    <property type="molecule type" value="mRNA"/>
</dbReference>
<dbReference type="SMR" id="P49298"/>
<dbReference type="UniPathway" id="UPA00223">
    <property type="reaction ID" value="UER00717"/>
</dbReference>
<dbReference type="GO" id="GO:0005759">
    <property type="term" value="C:mitochondrial matrix"/>
    <property type="evidence" value="ECO:0007669"/>
    <property type="project" value="UniProtKB-SubCell"/>
</dbReference>
<dbReference type="GO" id="GO:0004108">
    <property type="term" value="F:citrate (Si)-synthase activity"/>
    <property type="evidence" value="ECO:0007669"/>
    <property type="project" value="InterPro"/>
</dbReference>
<dbReference type="GO" id="GO:0005975">
    <property type="term" value="P:carbohydrate metabolic process"/>
    <property type="evidence" value="ECO:0007669"/>
    <property type="project" value="TreeGrafter"/>
</dbReference>
<dbReference type="GO" id="GO:0006101">
    <property type="term" value="P:citrate metabolic process"/>
    <property type="evidence" value="ECO:0007669"/>
    <property type="project" value="InterPro"/>
</dbReference>
<dbReference type="GO" id="GO:0006099">
    <property type="term" value="P:tricarboxylic acid cycle"/>
    <property type="evidence" value="ECO:0007669"/>
    <property type="project" value="UniProtKB-UniPathway"/>
</dbReference>
<dbReference type="FunFam" id="1.10.230.10:FF:000001">
    <property type="entry name" value="Citrate synthase"/>
    <property type="match status" value="1"/>
</dbReference>
<dbReference type="FunFam" id="1.10.580.10:FF:000001">
    <property type="entry name" value="Citrate synthase"/>
    <property type="match status" value="1"/>
</dbReference>
<dbReference type="Gene3D" id="1.10.580.10">
    <property type="entry name" value="Citrate Synthase, domain 1"/>
    <property type="match status" value="1"/>
</dbReference>
<dbReference type="Gene3D" id="1.10.230.10">
    <property type="entry name" value="Cytochrome P450-Terp, domain 2"/>
    <property type="match status" value="1"/>
</dbReference>
<dbReference type="InterPro" id="IPR016142">
    <property type="entry name" value="Citrate_synth-like_lrg_a-sub"/>
</dbReference>
<dbReference type="InterPro" id="IPR016143">
    <property type="entry name" value="Citrate_synth-like_sm_a-sub"/>
</dbReference>
<dbReference type="InterPro" id="IPR002020">
    <property type="entry name" value="Citrate_synthase"/>
</dbReference>
<dbReference type="InterPro" id="IPR019810">
    <property type="entry name" value="Citrate_synthase_AS"/>
</dbReference>
<dbReference type="InterPro" id="IPR010109">
    <property type="entry name" value="Citrate_synthase_euk"/>
</dbReference>
<dbReference type="InterPro" id="IPR036969">
    <property type="entry name" value="Citrate_synthase_sf"/>
</dbReference>
<dbReference type="NCBIfam" id="TIGR01793">
    <property type="entry name" value="cit_synth_euk"/>
    <property type="match status" value="1"/>
</dbReference>
<dbReference type="NCBIfam" id="NF007128">
    <property type="entry name" value="PRK09569.1"/>
    <property type="match status" value="1"/>
</dbReference>
<dbReference type="PANTHER" id="PTHR11739">
    <property type="entry name" value="CITRATE SYNTHASE"/>
    <property type="match status" value="1"/>
</dbReference>
<dbReference type="PANTHER" id="PTHR11739:SF8">
    <property type="entry name" value="CITRATE SYNTHASE, MITOCHONDRIAL"/>
    <property type="match status" value="1"/>
</dbReference>
<dbReference type="Pfam" id="PF00285">
    <property type="entry name" value="Citrate_synt"/>
    <property type="match status" value="1"/>
</dbReference>
<dbReference type="PRINTS" id="PR00143">
    <property type="entry name" value="CITRTSNTHASE"/>
</dbReference>
<dbReference type="SUPFAM" id="SSF48256">
    <property type="entry name" value="Citrate synthase"/>
    <property type="match status" value="1"/>
</dbReference>
<dbReference type="PROSITE" id="PS00480">
    <property type="entry name" value="CITRATE_SYNTHASE"/>
    <property type="match status" value="1"/>
</dbReference>
<proteinExistence type="evidence at transcript level"/>
<sequence length="471" mass="52183">MASLRSATALSRLRSRAGQQSNLSNSVRWLQMQSSADLDLHSQLKEMIPEQQERLKKVKSDLGKAQLGNITIDVVIGGMRGMTGLLWETSLLDPDEGIRFRGLSIPECQKLLPAAKPDGEPLPEGLLWLLLTGKVPSKEQVDGLSKELRDRATVPDYVYKAIDALPVSAHPMTQFASGVMALQVQSEFQEAYEKGIHKSKSWEPTSEDSLNLIARVPVVAAYVYQRIYKDGKIIPKDDSLDYGGNFSHMLGFDDPKMLELMRLYVTIHSDHEGGNVSAHTGHLVASALSDPYLSFLAALNGLAGPLHGLANQEVLLWIKSVVDECGENVTTEQLKDYVWKTLNSGKVVPGFGHGVLRKTDPRYTCQREFALKHLPDDPLFQLVSKLYEVVPPILTKLGKVKNPWPNVDAHSGVLLNHFGLAEARYYTVLFGVSRSLGICSQLIWDRALGLPLERPKSVTLDWIEKNCKKAA</sequence>